<sequence length="1095" mass="118719">MATVGEWSCARCTFLNPAGQRQCSICEAPRHKPDLDQILRLSVEEQKWPCARCTFRNFLGKEACEVCGFTPEPVPGAPLLPIINGVLPKPPTILVEPKGSGKEEAGPVRTAGLVATEPARGRPEGEEEREERGEEEEKEQEGEGERAEPGSGWACQRCTLHNTPVASSCSACGGPRKLSLPRIPPEALVVPEVVAPTGFHVVPAPSQPVLPGEGAEADSPSTSQGPTSTDQEPPRVPLFSPFSPTLQNNPVPRSRREVPPQLQPPVPEAVQSSASTSSKGPQQGPGRAAAGASRLAELLSGKELLPGKRLSVLEEEVPESSPARCESCSDVIDLAGDIVRYTPASPSSPDFTTWSCARCTLRNPTTAPRCSVCGGSKLHGFQEHSEPPTHCPDCGANKPGPCVGSCGRAPSAHKAVRLLPDRPGQWACPACTLINTPRAKHCAACHTPQLLVTQCRGATPLRRRESMHVEKRRQTDEGEAKALWENIVAFCRENSVNFVDDSFPPGPASVGFPVGDSVQQRVKQWLRPHEINCSVFRDHGTPWSVFHTLRPSDILQGLLGNCWFLSALAVLAERPDLVERVMVTRSLCAEGAYQVRLCKDGTWTTVLVDDMLPCDEAGFLLFSQAQRKQLWVALIEKALAKLHGSYFALQAGRAIEGLATLTGAPCESLALQVSSTNPREEPVDTDLIWAKMLSSKEAGFLMGASCGGGNMKVDDAAYESLGLRPRHAYSVLDVRDVQGSRLLRLRNPWGRFSWNGSWSDEWPHWPGHLRAELMPHGSSEGVFWMEYSDFIRYFDSVDICKVHSDWQEARVQGCFPSTAGGPVGVTALTVLERASLEFALFQEGSRRSDSVDSHLLDLCILVFRATFGTGGRLSLGRLLAHSKRAVKKFVNCDVMLEPGEYAVVCCAFNHWNPAPPGPPAQASSPSAGVPRGAPEPPGHVLAVYSSRLVMVEPVEAQPTTLADAIILLTESRGERHEGREGMTCYYLTHGWAGLIVVVENRHPKSYLHVQCDCTDSFNVVSTRGSLRTQDSVPPLHRQVLVILSQLEGNAGFSITHRLAHRKAAQAFLSDWTASRGTHSPPLTPDVAGLHGPRPL</sequence>
<proteinExistence type="evidence at protein level"/>
<accession>Q9JLG8</accession>
<accession>Q6PEE9</accession>
<comment type="alternative products">
    <event type="alternative splicing"/>
    <isoform>
        <id>Q9JLG8-1</id>
        <name>1</name>
        <sequence type="displayed"/>
    </isoform>
    <isoform>
        <id>Q9JLG8-2</id>
        <name>2</name>
        <sequence type="described" ref="VSP_023363 VSP_023364 VSP_023365"/>
    </isoform>
</comment>
<comment type="tissue specificity">
    <text evidence="6 7">Highly expressed in the brain and eye during development (PubMed:32885237). Expressed in olfactory bulbs (at protein level) (PubMed:10708520).</text>
</comment>
<comment type="disruption phenotype">
    <text evidence="7">Knockout animals show significantly reduced viability. Homozygous knockout mice also weigh significantly less than their wild-type or heterozygous littermates. These mice also display severe developmental eye defects, including anophthalmia, microphthalmia, and cataract, and the presence of these phenotypes is significantly increased compared to wild-type or heterozygous mice.</text>
</comment>
<comment type="similarity">
    <text evidence="9">Belongs to the peptidase C2 family.</text>
</comment>
<protein>
    <recommendedName>
        <fullName>Calpain-15</fullName>
        <ecNumber>3.4.22.-</ecNumber>
    </recommendedName>
    <alternativeName>
        <fullName>Small optic lobes homolog</fullName>
    </alternativeName>
</protein>
<gene>
    <name type="primary">Capn15</name>
    <name type="synonym">Solh</name>
</gene>
<reference key="1">
    <citation type="journal article" date="2000" name="Genomics">
        <title>Solh, the mouse homologue of the Drosophila melanogaster small optic lobes gene: organization, chromosomal mapping, and localization of gene product to the olfactory bulb.</title>
        <authorList>
            <person name="Kamei M."/>
            <person name="Webb G.C."/>
            <person name="Heydon K."/>
            <person name="Hendry I.A."/>
            <person name="Young I.G."/>
            <person name="Campbell H.D."/>
        </authorList>
    </citation>
    <scope>NUCLEOTIDE SEQUENCE [GENOMIC DNA]</scope>
    <scope>TISSUE SPECIFICITY</scope>
    <source>
        <strain>BALB/cJ</strain>
    </source>
</reference>
<reference key="2">
    <citation type="journal article" date="2004" name="Genome Res.">
        <title>The status, quality, and expansion of the NIH full-length cDNA project: the Mammalian Gene Collection (MGC).</title>
        <authorList>
            <consortium name="The MGC Project Team"/>
        </authorList>
    </citation>
    <scope>NUCLEOTIDE SEQUENCE [LARGE SCALE MRNA] (ISOFORM 2)</scope>
    <source>
        <strain>C57BL/6J</strain>
        <tissue>Fetal brain</tissue>
    </source>
</reference>
<reference key="3">
    <citation type="journal article" date="2020" name="Hum. Mol. Genet.">
        <title>Biallelic variants in the small optic lobe calpain CAPN15 are associated with congenital eye anomalies, deafness and other neurodevelopmental deficits.</title>
        <authorList>
            <person name="Zha C."/>
            <person name="Farah C.A."/>
            <person name="Holt R.J."/>
            <person name="Ceroni F."/>
            <person name="Al-Abdi L."/>
            <person name="Thuriot F."/>
            <person name="Khan A.O."/>
            <person name="Helaby R."/>
            <person name="Levesque S."/>
            <person name="Alkuraya F.S."/>
            <person name="Kraus A."/>
            <person name="Ragge N.K."/>
            <person name="Sossin W.S."/>
        </authorList>
    </citation>
    <scope>DISRUPTION PHENOTYPE</scope>
    <scope>TISSUE SPECIFICITY</scope>
</reference>
<keyword id="KW-0025">Alternative splicing</keyword>
<keyword id="KW-0378">Hydrolase</keyword>
<keyword id="KW-0479">Metal-binding</keyword>
<keyword id="KW-0597">Phosphoprotein</keyword>
<keyword id="KW-0645">Protease</keyword>
<keyword id="KW-1185">Reference proteome</keyword>
<keyword id="KW-0677">Repeat</keyword>
<keyword id="KW-0788">Thiol protease</keyword>
<keyword id="KW-0862">Zinc</keyword>
<keyword id="KW-0863">Zinc-finger</keyword>
<organism>
    <name type="scientific">Mus musculus</name>
    <name type="common">Mouse</name>
    <dbReference type="NCBI Taxonomy" id="10090"/>
    <lineage>
        <taxon>Eukaryota</taxon>
        <taxon>Metazoa</taxon>
        <taxon>Chordata</taxon>
        <taxon>Craniata</taxon>
        <taxon>Vertebrata</taxon>
        <taxon>Euteleostomi</taxon>
        <taxon>Mammalia</taxon>
        <taxon>Eutheria</taxon>
        <taxon>Euarchontoglires</taxon>
        <taxon>Glires</taxon>
        <taxon>Rodentia</taxon>
        <taxon>Myomorpha</taxon>
        <taxon>Muroidea</taxon>
        <taxon>Muridae</taxon>
        <taxon>Murinae</taxon>
        <taxon>Mus</taxon>
        <taxon>Mus</taxon>
    </lineage>
</organism>
<dbReference type="EC" id="3.4.22.-"/>
<dbReference type="EMBL" id="AF180445">
    <property type="protein sequence ID" value="AAF62871.1"/>
    <property type="molecule type" value="Genomic_DNA"/>
</dbReference>
<dbReference type="EMBL" id="BC058094">
    <property type="protein sequence ID" value="AAH58094.1"/>
    <property type="molecule type" value="mRNA"/>
</dbReference>
<dbReference type="RefSeq" id="NP_056645.1">
    <property type="nucleotide sequence ID" value="NM_015830.1"/>
</dbReference>
<dbReference type="SMR" id="Q9JLG8"/>
<dbReference type="BioGRID" id="206132">
    <property type="interactions" value="2"/>
</dbReference>
<dbReference type="FunCoup" id="Q9JLG8">
    <property type="interactions" value="778"/>
</dbReference>
<dbReference type="STRING" id="10090.ENSMUSP00000148486"/>
<dbReference type="iPTMnet" id="Q9JLG8"/>
<dbReference type="PhosphoSitePlus" id="Q9JLG8"/>
<dbReference type="PaxDb" id="10090-ENSMUSP00000039528"/>
<dbReference type="ProteomicsDB" id="265522">
    <molecule id="Q9JLG8-1"/>
</dbReference>
<dbReference type="ProteomicsDB" id="265523">
    <molecule id="Q9JLG8-2"/>
</dbReference>
<dbReference type="Pumba" id="Q9JLG8"/>
<dbReference type="Antibodypedia" id="22715">
    <property type="antibodies" value="78 antibodies from 15 providers"/>
</dbReference>
<dbReference type="DNASU" id="50817"/>
<dbReference type="Ensembl" id="ENSMUST00000041641.9">
    <molecule id="Q9JLG8-1"/>
    <property type="protein sequence ID" value="ENSMUSP00000039528.9"/>
    <property type="gene ID" value="ENSMUSG00000037326.11"/>
</dbReference>
<dbReference type="Ensembl" id="ENSMUST00000212149.2">
    <molecule id="Q9JLG8-1"/>
    <property type="protein sequence ID" value="ENSMUSP00000148718.2"/>
    <property type="gene ID" value="ENSMUSG00000037326.11"/>
</dbReference>
<dbReference type="GeneID" id="50817"/>
<dbReference type="KEGG" id="mmu:50817"/>
<dbReference type="UCSC" id="uc008bcz.1">
    <molecule id="Q9JLG8-1"/>
    <property type="organism name" value="mouse"/>
</dbReference>
<dbReference type="AGR" id="MGI:1355075"/>
<dbReference type="CTD" id="6650"/>
<dbReference type="MGI" id="MGI:1355075">
    <property type="gene designation" value="Capn15"/>
</dbReference>
<dbReference type="VEuPathDB" id="HostDB:ENSMUSG00000037326"/>
<dbReference type="eggNOG" id="KOG0045">
    <property type="taxonomic scope" value="Eukaryota"/>
</dbReference>
<dbReference type="GeneTree" id="ENSGT00940000158312"/>
<dbReference type="HOGENOM" id="CLU_003001_0_0_1"/>
<dbReference type="InParanoid" id="Q9JLG8"/>
<dbReference type="OMA" id="AWRMAEP"/>
<dbReference type="OrthoDB" id="424753at2759"/>
<dbReference type="PhylomeDB" id="Q9JLG8"/>
<dbReference type="TreeFam" id="TF322245"/>
<dbReference type="Reactome" id="R-MMU-1474228">
    <property type="pathway name" value="Degradation of the extracellular matrix"/>
</dbReference>
<dbReference type="BioGRID-ORCS" id="50817">
    <property type="hits" value="7 hits in 78 CRISPR screens"/>
</dbReference>
<dbReference type="ChiTaRS" id="Capn15">
    <property type="organism name" value="mouse"/>
</dbReference>
<dbReference type="PRO" id="PR:Q9JLG8"/>
<dbReference type="Proteomes" id="UP000000589">
    <property type="component" value="Chromosome 17"/>
</dbReference>
<dbReference type="RNAct" id="Q9JLG8">
    <property type="molecule type" value="protein"/>
</dbReference>
<dbReference type="Bgee" id="ENSMUSG00000037326">
    <property type="expression patterns" value="Expressed in motor neuron and 252 other cell types or tissues"/>
</dbReference>
<dbReference type="ExpressionAtlas" id="Q9JLG8">
    <property type="expression patterns" value="baseline and differential"/>
</dbReference>
<dbReference type="GO" id="GO:0004198">
    <property type="term" value="F:calcium-dependent cysteine-type endopeptidase activity"/>
    <property type="evidence" value="ECO:0007669"/>
    <property type="project" value="InterPro"/>
</dbReference>
<dbReference type="GO" id="GO:0008270">
    <property type="term" value="F:zinc ion binding"/>
    <property type="evidence" value="ECO:0007669"/>
    <property type="project" value="UniProtKB-KW"/>
</dbReference>
<dbReference type="GO" id="GO:0006508">
    <property type="term" value="P:proteolysis"/>
    <property type="evidence" value="ECO:0007669"/>
    <property type="project" value="UniProtKB-KW"/>
</dbReference>
<dbReference type="CDD" id="cd00044">
    <property type="entry name" value="CysPc"/>
    <property type="match status" value="1"/>
</dbReference>
<dbReference type="FunFam" id="2.30.30.380:FF:000009">
    <property type="entry name" value="Calpain 15"/>
    <property type="match status" value="1"/>
</dbReference>
<dbReference type="FunFam" id="2.30.30.380:FF:000019">
    <property type="entry name" value="Calpain 15"/>
    <property type="match status" value="1"/>
</dbReference>
<dbReference type="FunFam" id="3.90.70.10:FF:000010">
    <property type="entry name" value="Calpain 15"/>
    <property type="match status" value="1"/>
</dbReference>
<dbReference type="FunFam" id="4.10.1060.10:FF:000010">
    <property type="entry name" value="Calpain 15"/>
    <property type="match status" value="1"/>
</dbReference>
<dbReference type="FunFam" id="4.10.1060.10:FF:000019">
    <property type="entry name" value="Calpain 15"/>
    <property type="match status" value="1"/>
</dbReference>
<dbReference type="Gene3D" id="3.90.70.10">
    <property type="entry name" value="Cysteine proteinases"/>
    <property type="match status" value="1"/>
</dbReference>
<dbReference type="Gene3D" id="4.10.1060.10">
    <property type="entry name" value="Zinc finger, RanBP2-type"/>
    <property type="match status" value="3"/>
</dbReference>
<dbReference type="Gene3D" id="2.30.30.380">
    <property type="entry name" value="Zn-finger domain of Sec23/24"/>
    <property type="match status" value="1"/>
</dbReference>
<dbReference type="InterPro" id="IPR022684">
    <property type="entry name" value="Calpain_cysteine_protease"/>
</dbReference>
<dbReference type="InterPro" id="IPR038765">
    <property type="entry name" value="Papain-like_cys_pep_sf"/>
</dbReference>
<dbReference type="InterPro" id="IPR000169">
    <property type="entry name" value="Pept_cys_AS"/>
</dbReference>
<dbReference type="InterPro" id="IPR001300">
    <property type="entry name" value="Peptidase_C2_calpain_cat"/>
</dbReference>
<dbReference type="InterPro" id="IPR001876">
    <property type="entry name" value="Znf_RanBP2"/>
</dbReference>
<dbReference type="InterPro" id="IPR036443">
    <property type="entry name" value="Znf_RanBP2_sf"/>
</dbReference>
<dbReference type="PANTHER" id="PTHR10183">
    <property type="entry name" value="CALPAIN"/>
    <property type="match status" value="1"/>
</dbReference>
<dbReference type="PANTHER" id="PTHR10183:SF382">
    <property type="entry name" value="CALPAIN-15"/>
    <property type="match status" value="1"/>
</dbReference>
<dbReference type="Pfam" id="PF00648">
    <property type="entry name" value="Peptidase_C2"/>
    <property type="match status" value="1"/>
</dbReference>
<dbReference type="Pfam" id="PF00641">
    <property type="entry name" value="Zn_ribbon_RanBP"/>
    <property type="match status" value="4"/>
</dbReference>
<dbReference type="PRINTS" id="PR00704">
    <property type="entry name" value="CALPAIN"/>
</dbReference>
<dbReference type="SMART" id="SM00230">
    <property type="entry name" value="CysPc"/>
    <property type="match status" value="1"/>
</dbReference>
<dbReference type="SMART" id="SM00547">
    <property type="entry name" value="ZnF_RBZ"/>
    <property type="match status" value="5"/>
</dbReference>
<dbReference type="SUPFAM" id="SSF54001">
    <property type="entry name" value="Cysteine proteinases"/>
    <property type="match status" value="1"/>
</dbReference>
<dbReference type="SUPFAM" id="SSF90209">
    <property type="entry name" value="Ran binding protein zinc finger-like"/>
    <property type="match status" value="4"/>
</dbReference>
<dbReference type="PROSITE" id="PS50203">
    <property type="entry name" value="CALPAIN_CAT"/>
    <property type="match status" value="1"/>
</dbReference>
<dbReference type="PROSITE" id="PS00139">
    <property type="entry name" value="THIOL_PROTEASE_CYS"/>
    <property type="match status" value="1"/>
</dbReference>
<dbReference type="PROSITE" id="PS01358">
    <property type="entry name" value="ZF_RANBP2_1"/>
    <property type="match status" value="5"/>
</dbReference>
<dbReference type="PROSITE" id="PS50199">
    <property type="entry name" value="ZF_RANBP2_2"/>
    <property type="match status" value="4"/>
</dbReference>
<evidence type="ECO:0000250" key="1"/>
<evidence type="ECO:0000250" key="2">
    <source>
        <dbReference type="UniProtKB" id="O75808"/>
    </source>
</evidence>
<evidence type="ECO:0000255" key="3">
    <source>
        <dbReference type="PROSITE-ProRule" id="PRU00239"/>
    </source>
</evidence>
<evidence type="ECO:0000255" key="4">
    <source>
        <dbReference type="PROSITE-ProRule" id="PRU00322"/>
    </source>
</evidence>
<evidence type="ECO:0000256" key="5">
    <source>
        <dbReference type="SAM" id="MobiDB-lite"/>
    </source>
</evidence>
<evidence type="ECO:0000269" key="6">
    <source>
    </source>
</evidence>
<evidence type="ECO:0000269" key="7">
    <source>
    </source>
</evidence>
<evidence type="ECO:0000303" key="8">
    <source>
    </source>
</evidence>
<evidence type="ECO:0000305" key="9"/>
<feature type="chain" id="PRO_0000278771" description="Calpain-15">
    <location>
        <begin position="1"/>
        <end position="1095"/>
    </location>
</feature>
<feature type="domain" description="Calpain catalytic" evidence="3">
    <location>
        <begin position="497"/>
        <end position="803"/>
    </location>
</feature>
<feature type="zinc finger region" description="RanBP2-type 1" evidence="4">
    <location>
        <begin position="3"/>
        <end position="32"/>
    </location>
</feature>
<feature type="zinc finger region" description="RanBP2-type 2" evidence="4">
    <location>
        <begin position="44"/>
        <end position="73"/>
    </location>
</feature>
<feature type="zinc finger region" description="RanBP2-type 3" evidence="4">
    <location>
        <begin position="148"/>
        <end position="178"/>
    </location>
</feature>
<feature type="zinc finger region" description="RanBP2-type 4" evidence="4">
    <location>
        <begin position="348"/>
        <end position="379"/>
    </location>
</feature>
<feature type="zinc finger region" description="RanBP2-type 5" evidence="4">
    <location>
        <begin position="422"/>
        <end position="451"/>
    </location>
</feature>
<feature type="region of interest" description="Disordered" evidence="5">
    <location>
        <begin position="96"/>
        <end position="153"/>
    </location>
</feature>
<feature type="region of interest" description="Disordered" evidence="5">
    <location>
        <begin position="204"/>
        <end position="292"/>
    </location>
</feature>
<feature type="region of interest" description="Disordered" evidence="5">
    <location>
        <begin position="1074"/>
        <end position="1095"/>
    </location>
</feature>
<feature type="compositionally biased region" description="Acidic residues" evidence="5">
    <location>
        <begin position="125"/>
        <end position="140"/>
    </location>
</feature>
<feature type="compositionally biased region" description="Polar residues" evidence="5">
    <location>
        <begin position="219"/>
        <end position="231"/>
    </location>
</feature>
<feature type="compositionally biased region" description="Polar residues" evidence="5">
    <location>
        <begin position="242"/>
        <end position="251"/>
    </location>
</feature>
<feature type="compositionally biased region" description="Low complexity" evidence="5">
    <location>
        <begin position="280"/>
        <end position="292"/>
    </location>
</feature>
<feature type="active site" evidence="1">
    <location>
        <position position="562"/>
    </location>
</feature>
<feature type="active site" evidence="1">
    <location>
        <position position="727"/>
    </location>
</feature>
<feature type="active site" evidence="1">
    <location>
        <position position="747"/>
    </location>
</feature>
<feature type="modified residue" description="Phosphoserine" evidence="2">
    <location>
        <position position="311"/>
    </location>
</feature>
<feature type="modified residue" description="Phosphoserine" evidence="2">
    <location>
        <position position="345"/>
    </location>
</feature>
<feature type="modified residue" description="Phosphoserine" evidence="2">
    <location>
        <position position="348"/>
    </location>
</feature>
<feature type="modified residue" description="Phosphoserine" evidence="2">
    <location>
        <position position="1079"/>
    </location>
</feature>
<feature type="splice variant" id="VSP_023363" description="In isoform 2." evidence="8">
    <original>Q</original>
    <variation>QGKGPSQMRPTPSFPTSEPQSPPTGKLLAPLSTPPT</variation>
    <location>
        <position position="921"/>
    </location>
</feature>
<feature type="splice variant" id="VSP_023364" description="In isoform 2." evidence="8">
    <original>GREGMTCYYLTHGWAGLIVVVENRHPKSYLHVQCDCTDSFNVVSTRGSLRTQDSVPPLHR</original>
    <variation>VGGVLMGEGRGWATTSPGPPTLCLCPGSRGHDLLLPDSWLGGTHRGSGEPAPQVLPACAM</variation>
    <location>
        <begin position="978"/>
        <end position="1037"/>
    </location>
</feature>
<feature type="splice variant" id="VSP_023365" description="In isoform 2." evidence="8">
    <location>
        <begin position="1038"/>
        <end position="1095"/>
    </location>
</feature>
<name>CAN15_MOUSE</name>